<organism>
    <name type="scientific">Mycobacterium tuberculosis (strain CDC 1551 / Oshkosh)</name>
    <dbReference type="NCBI Taxonomy" id="83331"/>
    <lineage>
        <taxon>Bacteria</taxon>
        <taxon>Bacillati</taxon>
        <taxon>Actinomycetota</taxon>
        <taxon>Actinomycetes</taxon>
        <taxon>Mycobacteriales</taxon>
        <taxon>Mycobacteriaceae</taxon>
        <taxon>Mycobacterium</taxon>
        <taxon>Mycobacterium tuberculosis complex</taxon>
    </lineage>
</organism>
<comment type="function">
    <text evidence="1">Catalyzes the conversion of (8S)-3',8-cyclo-7,8-dihydroguanosine 5'-triphosphate to cyclic pyranopterin monophosphate (cPMP).</text>
</comment>
<comment type="catalytic activity">
    <reaction evidence="1">
        <text>(8S)-3',8-cyclo-7,8-dihydroguanosine 5'-triphosphate = cyclic pyranopterin phosphate + diphosphate</text>
        <dbReference type="Rhea" id="RHEA:49580"/>
        <dbReference type="ChEBI" id="CHEBI:33019"/>
        <dbReference type="ChEBI" id="CHEBI:59648"/>
        <dbReference type="ChEBI" id="CHEBI:131766"/>
        <dbReference type="EC" id="4.6.1.17"/>
    </reaction>
</comment>
<comment type="pathway">
    <text evidence="1">Cofactor biosynthesis; molybdopterin biosynthesis.</text>
</comment>
<comment type="subunit">
    <text evidence="1">Homohexamer; trimer of dimers.</text>
</comment>
<comment type="similarity">
    <text evidence="1">Belongs to the MoaC family.</text>
</comment>
<comment type="sequence caution" evidence="3">
    <conflict type="erroneous initiation">
        <sequence resource="EMBL-CDS" id="AAK47767"/>
    </conflict>
</comment>
<protein>
    <recommendedName>
        <fullName evidence="1">Cyclic pyranopterin monophosphate synthase 3</fullName>
        <ecNumber evidence="1">4.6.1.17</ecNumber>
    </recommendedName>
    <alternativeName>
        <fullName evidence="1">Molybdenum cofactor biosynthesis protein C 3</fullName>
    </alternativeName>
</protein>
<name>MOAC3_MYCTO</name>
<proteinExistence type="inferred from homology"/>
<feature type="chain" id="PRO_0000427784" description="Cyclic pyranopterin monophosphate synthase 3">
    <location>
        <begin position="1"/>
        <end position="177"/>
    </location>
</feature>
<feature type="region of interest" description="Disordered" evidence="2">
    <location>
        <begin position="150"/>
        <end position="177"/>
    </location>
</feature>
<feature type="active site" evidence="1">
    <location>
        <position position="131"/>
    </location>
</feature>
<feature type="binding site" evidence="1">
    <location>
        <begin position="79"/>
        <end position="81"/>
    </location>
    <ligand>
        <name>substrate</name>
    </ligand>
</feature>
<feature type="binding site" evidence="1">
    <location>
        <begin position="116"/>
        <end position="117"/>
    </location>
    <ligand>
        <name>substrate</name>
    </ligand>
</feature>
<gene>
    <name type="primary">moaC3</name>
    <name type="ordered locus">MT3425</name>
</gene>
<reference key="1">
    <citation type="journal article" date="2002" name="J. Bacteriol.">
        <title>Whole-genome comparison of Mycobacterium tuberculosis clinical and laboratory strains.</title>
        <authorList>
            <person name="Fleischmann R.D."/>
            <person name="Alland D."/>
            <person name="Eisen J.A."/>
            <person name="Carpenter L."/>
            <person name="White O."/>
            <person name="Peterson J.D."/>
            <person name="DeBoy R.T."/>
            <person name="Dodson R.J."/>
            <person name="Gwinn M.L."/>
            <person name="Haft D.H."/>
            <person name="Hickey E.K."/>
            <person name="Kolonay J.F."/>
            <person name="Nelson W.C."/>
            <person name="Umayam L.A."/>
            <person name="Ermolaeva M.D."/>
            <person name="Salzberg S.L."/>
            <person name="Delcher A."/>
            <person name="Utterback T.R."/>
            <person name="Weidman J.F."/>
            <person name="Khouri H.M."/>
            <person name="Gill J."/>
            <person name="Mikula A."/>
            <person name="Bishai W."/>
            <person name="Jacobs W.R. Jr."/>
            <person name="Venter J.C."/>
            <person name="Fraser C.M."/>
        </authorList>
    </citation>
    <scope>NUCLEOTIDE SEQUENCE [LARGE SCALE GENOMIC DNA]</scope>
    <source>
        <strain>CDC 1551 / Oshkosh</strain>
    </source>
</reference>
<sequence>MNDHDGVLTHLDEQGAARMVDVSAKAVTLRRARASGAVLMKPSTLDMICHGTAAKGDVIATARIAGIMAAKRTGELIPLCHPLGIEAVTVTLEPQGADRLSIAATVTTVARTGVEMEALTAVTVTALTVYDMCKAVDRAMTITDIRLDEKSGGRSGHYRRHDADVKPSDGGSTEDGC</sequence>
<dbReference type="EC" id="4.6.1.17" evidence="1"/>
<dbReference type="EMBL" id="AE000516">
    <property type="protein sequence ID" value="AAK47767.1"/>
    <property type="status" value="ALT_INIT"/>
    <property type="molecule type" value="Genomic_DNA"/>
</dbReference>
<dbReference type="PIR" id="C70844">
    <property type="entry name" value="C70844"/>
</dbReference>
<dbReference type="SMR" id="P9WJR4"/>
<dbReference type="KEGG" id="mtc:MT3425"/>
<dbReference type="PATRIC" id="fig|83331.31.peg.3684"/>
<dbReference type="HOGENOM" id="CLU_074693_1_1_11"/>
<dbReference type="UniPathway" id="UPA00344"/>
<dbReference type="Proteomes" id="UP000001020">
    <property type="component" value="Chromosome"/>
</dbReference>
<dbReference type="GO" id="GO:0061799">
    <property type="term" value="F:cyclic pyranopterin monophosphate synthase activity"/>
    <property type="evidence" value="ECO:0007669"/>
    <property type="project" value="UniProtKB-UniRule"/>
</dbReference>
<dbReference type="GO" id="GO:0006777">
    <property type="term" value="P:Mo-molybdopterin cofactor biosynthetic process"/>
    <property type="evidence" value="ECO:0007669"/>
    <property type="project" value="UniProtKB-UniRule"/>
</dbReference>
<dbReference type="CDD" id="cd01420">
    <property type="entry name" value="MoaC_PE"/>
    <property type="match status" value="1"/>
</dbReference>
<dbReference type="Gene3D" id="3.30.70.640">
    <property type="entry name" value="Molybdopterin cofactor biosynthesis C (MoaC) domain"/>
    <property type="match status" value="1"/>
</dbReference>
<dbReference type="HAMAP" id="MF_01224_B">
    <property type="entry name" value="MoaC_B"/>
    <property type="match status" value="1"/>
</dbReference>
<dbReference type="InterPro" id="IPR023045">
    <property type="entry name" value="MoaC"/>
</dbReference>
<dbReference type="InterPro" id="IPR047594">
    <property type="entry name" value="MoaC_bact/euk"/>
</dbReference>
<dbReference type="InterPro" id="IPR036522">
    <property type="entry name" value="MoaC_sf"/>
</dbReference>
<dbReference type="InterPro" id="IPR050105">
    <property type="entry name" value="MoCo_biosynth_MoaA/MoaC"/>
</dbReference>
<dbReference type="InterPro" id="IPR002820">
    <property type="entry name" value="Mopterin_CF_biosynth-C_dom"/>
</dbReference>
<dbReference type="NCBIfam" id="TIGR00581">
    <property type="entry name" value="moaC"/>
    <property type="match status" value="1"/>
</dbReference>
<dbReference type="NCBIfam" id="NF006870">
    <property type="entry name" value="PRK09364.1"/>
    <property type="match status" value="1"/>
</dbReference>
<dbReference type="PANTHER" id="PTHR22960:SF29">
    <property type="entry name" value="CYCLIC PYRANOPTERIN MONOPHOSPHATE SYNTHASE"/>
    <property type="match status" value="1"/>
</dbReference>
<dbReference type="PANTHER" id="PTHR22960">
    <property type="entry name" value="MOLYBDOPTERIN COFACTOR SYNTHESIS PROTEIN A"/>
    <property type="match status" value="1"/>
</dbReference>
<dbReference type="Pfam" id="PF01967">
    <property type="entry name" value="MoaC"/>
    <property type="match status" value="1"/>
</dbReference>
<dbReference type="SUPFAM" id="SSF55040">
    <property type="entry name" value="Molybdenum cofactor biosynthesis protein C, MoaC"/>
    <property type="match status" value="1"/>
</dbReference>
<accession>P9WJR4</accession>
<accession>L0TFA4</accession>
<accession>O53376</accession>
<accession>P65392</accession>
<evidence type="ECO:0000255" key="1">
    <source>
        <dbReference type="HAMAP-Rule" id="MF_01224"/>
    </source>
</evidence>
<evidence type="ECO:0000256" key="2">
    <source>
        <dbReference type="SAM" id="MobiDB-lite"/>
    </source>
</evidence>
<evidence type="ECO:0000305" key="3"/>
<keyword id="KW-0456">Lyase</keyword>
<keyword id="KW-0501">Molybdenum cofactor biosynthesis</keyword>
<keyword id="KW-1185">Reference proteome</keyword>